<evidence type="ECO:0000250" key="1"/>
<evidence type="ECO:0000255" key="2"/>
<evidence type="ECO:0000256" key="3">
    <source>
        <dbReference type="SAM" id="MobiDB-lite"/>
    </source>
</evidence>
<evidence type="ECO:0000305" key="4"/>
<feature type="chain" id="PRO_0000228018" description="Mitochondrial import inner membrane translocase subunit tim54">
    <location>
        <begin position="1"/>
        <end position="347"/>
    </location>
</feature>
<feature type="topological domain" description="Mitochondrial matrix" evidence="2">
    <location>
        <begin position="1"/>
        <end position="12"/>
    </location>
</feature>
<feature type="transmembrane region" description="Helical" evidence="2">
    <location>
        <begin position="13"/>
        <end position="30"/>
    </location>
</feature>
<feature type="topological domain" description="Mitochondrial intermembrane" evidence="2">
    <location>
        <begin position="31"/>
        <end position="347"/>
    </location>
</feature>
<feature type="region of interest" description="Disordered" evidence="3">
    <location>
        <begin position="181"/>
        <end position="216"/>
    </location>
</feature>
<feature type="compositionally biased region" description="Basic and acidic residues" evidence="3">
    <location>
        <begin position="181"/>
        <end position="196"/>
    </location>
</feature>
<feature type="compositionally biased region" description="Basic and acidic residues" evidence="3">
    <location>
        <begin position="202"/>
        <end position="216"/>
    </location>
</feature>
<accession>O94624</accession>
<reference key="1">
    <citation type="journal article" date="2002" name="Nature">
        <title>The genome sequence of Schizosaccharomyces pombe.</title>
        <authorList>
            <person name="Wood V."/>
            <person name="Gwilliam R."/>
            <person name="Rajandream M.A."/>
            <person name="Lyne M.H."/>
            <person name="Lyne R."/>
            <person name="Stewart A."/>
            <person name="Sgouros J.G."/>
            <person name="Peat N."/>
            <person name="Hayles J."/>
            <person name="Baker S.G."/>
            <person name="Basham D."/>
            <person name="Bowman S."/>
            <person name="Brooks K."/>
            <person name="Brown D."/>
            <person name="Brown S."/>
            <person name="Chillingworth T."/>
            <person name="Churcher C.M."/>
            <person name="Collins M."/>
            <person name="Connor R."/>
            <person name="Cronin A."/>
            <person name="Davis P."/>
            <person name="Feltwell T."/>
            <person name="Fraser A."/>
            <person name="Gentles S."/>
            <person name="Goble A."/>
            <person name="Hamlin N."/>
            <person name="Harris D.E."/>
            <person name="Hidalgo J."/>
            <person name="Hodgson G."/>
            <person name="Holroyd S."/>
            <person name="Hornsby T."/>
            <person name="Howarth S."/>
            <person name="Huckle E.J."/>
            <person name="Hunt S."/>
            <person name="Jagels K."/>
            <person name="James K.D."/>
            <person name="Jones L."/>
            <person name="Jones M."/>
            <person name="Leather S."/>
            <person name="McDonald S."/>
            <person name="McLean J."/>
            <person name="Mooney P."/>
            <person name="Moule S."/>
            <person name="Mungall K.L."/>
            <person name="Murphy L.D."/>
            <person name="Niblett D."/>
            <person name="Odell C."/>
            <person name="Oliver K."/>
            <person name="O'Neil S."/>
            <person name="Pearson D."/>
            <person name="Quail M.A."/>
            <person name="Rabbinowitsch E."/>
            <person name="Rutherford K.M."/>
            <person name="Rutter S."/>
            <person name="Saunders D."/>
            <person name="Seeger K."/>
            <person name="Sharp S."/>
            <person name="Skelton J."/>
            <person name="Simmonds M.N."/>
            <person name="Squares R."/>
            <person name="Squares S."/>
            <person name="Stevens K."/>
            <person name="Taylor K."/>
            <person name="Taylor R.G."/>
            <person name="Tivey A."/>
            <person name="Walsh S.V."/>
            <person name="Warren T."/>
            <person name="Whitehead S."/>
            <person name="Woodward J.R."/>
            <person name="Volckaert G."/>
            <person name="Aert R."/>
            <person name="Robben J."/>
            <person name="Grymonprez B."/>
            <person name="Weltjens I."/>
            <person name="Vanstreels E."/>
            <person name="Rieger M."/>
            <person name="Schaefer M."/>
            <person name="Mueller-Auer S."/>
            <person name="Gabel C."/>
            <person name="Fuchs M."/>
            <person name="Duesterhoeft A."/>
            <person name="Fritzc C."/>
            <person name="Holzer E."/>
            <person name="Moestl D."/>
            <person name="Hilbert H."/>
            <person name="Borzym K."/>
            <person name="Langer I."/>
            <person name="Beck A."/>
            <person name="Lehrach H."/>
            <person name="Reinhardt R."/>
            <person name="Pohl T.M."/>
            <person name="Eger P."/>
            <person name="Zimmermann W."/>
            <person name="Wedler H."/>
            <person name="Wambutt R."/>
            <person name="Purnelle B."/>
            <person name="Goffeau A."/>
            <person name="Cadieu E."/>
            <person name="Dreano S."/>
            <person name="Gloux S."/>
            <person name="Lelaure V."/>
            <person name="Mottier S."/>
            <person name="Galibert F."/>
            <person name="Aves S.J."/>
            <person name="Xiang Z."/>
            <person name="Hunt C."/>
            <person name="Moore K."/>
            <person name="Hurst S.M."/>
            <person name="Lucas M."/>
            <person name="Rochet M."/>
            <person name="Gaillardin C."/>
            <person name="Tallada V.A."/>
            <person name="Garzon A."/>
            <person name="Thode G."/>
            <person name="Daga R.R."/>
            <person name="Cruzado L."/>
            <person name="Jimenez J."/>
            <person name="Sanchez M."/>
            <person name="del Rey F."/>
            <person name="Benito J."/>
            <person name="Dominguez A."/>
            <person name="Revuelta J.L."/>
            <person name="Moreno S."/>
            <person name="Armstrong J."/>
            <person name="Forsburg S.L."/>
            <person name="Cerutti L."/>
            <person name="Lowe T."/>
            <person name="McCombie W.R."/>
            <person name="Paulsen I."/>
            <person name="Potashkin J."/>
            <person name="Shpakovski G.V."/>
            <person name="Ussery D."/>
            <person name="Barrell B.G."/>
            <person name="Nurse P."/>
        </authorList>
    </citation>
    <scope>NUCLEOTIDE SEQUENCE [LARGE SCALE GENOMIC DNA]</scope>
    <source>
        <strain>972 / ATCC 24843</strain>
    </source>
</reference>
<keyword id="KW-0472">Membrane</keyword>
<keyword id="KW-0496">Mitochondrion</keyword>
<keyword id="KW-0999">Mitochondrion inner membrane</keyword>
<keyword id="KW-0653">Protein transport</keyword>
<keyword id="KW-1185">Reference proteome</keyword>
<keyword id="KW-0811">Translocation</keyword>
<keyword id="KW-0812">Transmembrane</keyword>
<keyword id="KW-1133">Transmembrane helix</keyword>
<keyword id="KW-0813">Transport</keyword>
<sequence length="347" mass="39803">MLKTIKSYMPGRNMSIFLGFVAGISGAIYYDRRQKNLIIEKYCSQVRHLADQPMAPLELPRKLKVYLHGPPGDGIYVAREEFEEYIRPIFNAAAIEFETVESKGEGNLLEQVARTVYNKRHNISEVSEPEKNLLSVLKPSVDPPAIVLLGRHALKEFLYGVRYGFSDDIMKRKLETEKLEANNKEEKEEKEGKDDKDDKEDSNDTKNDKKISKNEVDSSLIEASPLTGQVPPKFLDTIAIFPLPNLLGFSNTPKRLSRFFKRRELADELGAIAVNVALSRDVTKFPKQDGTLLLAEEETDWPKQFFTRSDLENRIWTAPFLQDSDEIRFFENIDIFDSTKAKQDKYE</sequence>
<protein>
    <recommendedName>
        <fullName>Mitochondrial import inner membrane translocase subunit tim54</fullName>
    </recommendedName>
</protein>
<proteinExistence type="inferred from homology"/>
<gene>
    <name type="primary">tim54</name>
    <name type="ORF">SPBC1347.04</name>
</gene>
<dbReference type="EMBL" id="CU329671">
    <property type="protein sequence ID" value="CAB37435.1"/>
    <property type="molecule type" value="Genomic_DNA"/>
</dbReference>
<dbReference type="PIR" id="T39392">
    <property type="entry name" value="T39392"/>
</dbReference>
<dbReference type="RefSeq" id="NP_596696.1">
    <property type="nucleotide sequence ID" value="NM_001022620.2"/>
</dbReference>
<dbReference type="SMR" id="O94624"/>
<dbReference type="BioGRID" id="276634">
    <property type="interactions" value="1"/>
</dbReference>
<dbReference type="FunCoup" id="O94624">
    <property type="interactions" value="77"/>
</dbReference>
<dbReference type="STRING" id="284812.O94624"/>
<dbReference type="iPTMnet" id="O94624"/>
<dbReference type="PaxDb" id="4896-SPBC1347.04.1"/>
<dbReference type="EnsemblFungi" id="SPBC1347.04.1">
    <property type="protein sequence ID" value="SPBC1347.04.1:pep"/>
    <property type="gene ID" value="SPBC1347.04"/>
</dbReference>
<dbReference type="GeneID" id="2540096"/>
<dbReference type="KEGG" id="spo:2540096"/>
<dbReference type="PomBase" id="SPBC1347.04">
    <property type="gene designation" value="tim54"/>
</dbReference>
<dbReference type="VEuPathDB" id="FungiDB:SPBC1347.04"/>
<dbReference type="eggNOG" id="ENOG502QPMQ">
    <property type="taxonomic scope" value="Eukaryota"/>
</dbReference>
<dbReference type="HOGENOM" id="CLU_039097_0_0_1"/>
<dbReference type="InParanoid" id="O94624"/>
<dbReference type="OMA" id="RNWMIFF"/>
<dbReference type="PhylomeDB" id="O94624"/>
<dbReference type="Reactome" id="R-SPO-1483206">
    <property type="pathway name" value="Glycerophospholipid biosynthesis"/>
</dbReference>
<dbReference type="Reactome" id="R-SPO-1660661">
    <property type="pathway name" value="Sphingolipid de novo biosynthesis"/>
</dbReference>
<dbReference type="PRO" id="PR:O94624"/>
<dbReference type="Proteomes" id="UP000002485">
    <property type="component" value="Chromosome II"/>
</dbReference>
<dbReference type="GO" id="GO:0005737">
    <property type="term" value="C:cytoplasm"/>
    <property type="evidence" value="ECO:0000318"/>
    <property type="project" value="GO_Central"/>
</dbReference>
<dbReference type="GO" id="GO:0043231">
    <property type="term" value="C:intracellular membrane-bounded organelle"/>
    <property type="evidence" value="ECO:0000318"/>
    <property type="project" value="GO_Central"/>
</dbReference>
<dbReference type="GO" id="GO:0016020">
    <property type="term" value="C:membrane"/>
    <property type="evidence" value="ECO:0000318"/>
    <property type="project" value="GO_Central"/>
</dbReference>
<dbReference type="GO" id="GO:0042721">
    <property type="term" value="C:TIM22 mitochondrial import inner membrane insertion complex"/>
    <property type="evidence" value="ECO:0000250"/>
    <property type="project" value="PomBase"/>
</dbReference>
<dbReference type="GO" id="GO:0045039">
    <property type="term" value="P:protein insertion into mitochondrial inner membrane"/>
    <property type="evidence" value="ECO:0000250"/>
    <property type="project" value="PomBase"/>
</dbReference>
<dbReference type="InterPro" id="IPR021056">
    <property type="entry name" value="Mt_import_IM_translocase_Tim54"/>
</dbReference>
<dbReference type="Pfam" id="PF11711">
    <property type="entry name" value="Tim54"/>
    <property type="match status" value="1"/>
</dbReference>
<organism>
    <name type="scientific">Schizosaccharomyces pombe (strain 972 / ATCC 24843)</name>
    <name type="common">Fission yeast</name>
    <dbReference type="NCBI Taxonomy" id="284812"/>
    <lineage>
        <taxon>Eukaryota</taxon>
        <taxon>Fungi</taxon>
        <taxon>Dikarya</taxon>
        <taxon>Ascomycota</taxon>
        <taxon>Taphrinomycotina</taxon>
        <taxon>Schizosaccharomycetes</taxon>
        <taxon>Schizosaccharomycetales</taxon>
        <taxon>Schizosaccharomycetaceae</taxon>
        <taxon>Schizosaccharomyces</taxon>
    </lineage>
</organism>
<name>TIM54_SCHPO</name>
<comment type="function">
    <text evidence="1">Essential component of the TIM22 complex, a complex that mediates the import and insertion of multi-pass transmembrane proteins into the mitochondrial inner membrane. The TIM22 complex forms a twin-pore translocase that uses the membrane potential as external driving force (By similarity).</text>
</comment>
<comment type="subunit">
    <text evidence="1">Component of the TIM22 complex, whose core is composed of TIM22 and TIM54, associated with the 70 kDa heterohexamer composed of TIM9 and TIM10 (or TIM8 and TIM13).</text>
</comment>
<comment type="subcellular location">
    <subcellularLocation>
        <location evidence="1">Mitochondrion inner membrane</location>
        <topology evidence="1">Single-pass membrane protein</topology>
    </subcellularLocation>
</comment>
<comment type="similarity">
    <text evidence="4">Belongs to the TIM54 family.</text>
</comment>